<name>RGI1_KOMPG</name>
<gene>
    <name type="primary">RGI1</name>
    <name type="ordered locus">PAS_chr1-1_0407</name>
</gene>
<feature type="chain" id="PRO_0000402290" description="Respiratory growth induced protein 1">
    <location>
        <begin position="1"/>
        <end position="177"/>
    </location>
</feature>
<feature type="region of interest" description="Disordered" evidence="2">
    <location>
        <begin position="1"/>
        <end position="37"/>
    </location>
</feature>
<evidence type="ECO:0000250" key="1"/>
<evidence type="ECO:0000256" key="2">
    <source>
        <dbReference type="SAM" id="MobiDB-lite"/>
    </source>
</evidence>
<evidence type="ECO:0000305" key="3"/>
<reference key="1">
    <citation type="journal article" date="2009" name="Nat. Biotechnol.">
        <title>Genome sequence of the recombinant protein production host Pichia pastoris.</title>
        <authorList>
            <person name="De Schutter K."/>
            <person name="Lin Y.-C."/>
            <person name="Tiels P."/>
            <person name="Van Hecke A."/>
            <person name="Glinka S."/>
            <person name="Weber-Lehmann J."/>
            <person name="Rouze P."/>
            <person name="Van de Peer Y."/>
            <person name="Callewaert N."/>
        </authorList>
    </citation>
    <scope>NUCLEOTIDE SEQUENCE [LARGE SCALE GENOMIC DNA]</scope>
    <source>
        <strain>GS115 / ATCC 20864</strain>
    </source>
</reference>
<dbReference type="EMBL" id="FN392319">
    <property type="protein sequence ID" value="CAY67784.1"/>
    <property type="molecule type" value="Genomic_DNA"/>
</dbReference>
<dbReference type="RefSeq" id="XP_002490065.1">
    <property type="nucleotide sequence ID" value="XM_002490020.1"/>
</dbReference>
<dbReference type="SMR" id="C4QX11"/>
<dbReference type="FunCoup" id="C4QX11">
    <property type="interactions" value="84"/>
</dbReference>
<dbReference type="STRING" id="644223.C4QX11"/>
<dbReference type="EnsemblFungi" id="CAY67784">
    <property type="protein sequence ID" value="CAY67784"/>
    <property type="gene ID" value="PAS_chr1-1_0407"/>
</dbReference>
<dbReference type="GeneID" id="8196537"/>
<dbReference type="KEGG" id="ppa:PAS_chr1-1_0407"/>
<dbReference type="eggNOG" id="ENOG502S6JA">
    <property type="taxonomic scope" value="Eukaryota"/>
</dbReference>
<dbReference type="HOGENOM" id="CLU_118207_0_0_1"/>
<dbReference type="InParanoid" id="C4QX11"/>
<dbReference type="OMA" id="HLKYYPP"/>
<dbReference type="OrthoDB" id="4082176at2759"/>
<dbReference type="Proteomes" id="UP000000314">
    <property type="component" value="Chromosome 1"/>
</dbReference>
<dbReference type="GO" id="GO:0005886">
    <property type="term" value="C:plasma membrane"/>
    <property type="evidence" value="ECO:0007669"/>
    <property type="project" value="UniProtKB-SubCell"/>
</dbReference>
<dbReference type="GO" id="GO:0006112">
    <property type="term" value="P:energy reserve metabolic process"/>
    <property type="evidence" value="ECO:0007669"/>
    <property type="project" value="InterPro"/>
</dbReference>
<dbReference type="Gene3D" id="3.40.1000.40">
    <property type="entry name" value="Respiratory growth induced protein 1"/>
    <property type="match status" value="1"/>
</dbReference>
<dbReference type="InterPro" id="IPR022554">
    <property type="entry name" value="RGI1"/>
</dbReference>
<dbReference type="InterPro" id="IPR038235">
    <property type="entry name" value="RGI1_sf"/>
</dbReference>
<dbReference type="Pfam" id="PF10843">
    <property type="entry name" value="RGI1"/>
    <property type="match status" value="1"/>
</dbReference>
<keyword id="KW-1003">Cell membrane</keyword>
<keyword id="KW-0472">Membrane</keyword>
<keyword id="KW-1185">Reference proteome</keyword>
<comment type="function">
    <text evidence="1">Involved in the control of energetic metabolism and significantly contribute to cell fitness, especially under respiratory growth conditions.</text>
</comment>
<comment type="subcellular location">
    <subcellularLocation>
        <location evidence="1">Cell membrane</location>
        <topology evidence="1">Peripheral membrane protein</topology>
    </subcellularLocation>
</comment>
<comment type="similarity">
    <text evidence="3">Belongs to the RGI1 family.</text>
</comment>
<protein>
    <recommendedName>
        <fullName>Respiratory growth induced protein 1</fullName>
    </recommendedName>
</protein>
<proteinExistence type="inferred from homology"/>
<sequence length="177" mass="21172">MGRRKSQAAAERNLEPIKISTDSIKKRPRRDSNEPPFKKFDDLEMFETYLKGESWDNDFDFLHARLDYYPPFIRNEIHDDPEKIKPTMNNKSKKFVRNLHHHVDKHLLKQINDMVGIEYKFKREEEKLPDGRLIWRYKDESDHGFEGLDRKWTVEVDVECSPNDPTVVVDMRSIPID</sequence>
<accession>C4QX11</accession>
<organism>
    <name type="scientific">Komagataella phaffii (strain GS115 / ATCC 20864)</name>
    <name type="common">Yeast</name>
    <name type="synonym">Pichia pastoris</name>
    <dbReference type="NCBI Taxonomy" id="644223"/>
    <lineage>
        <taxon>Eukaryota</taxon>
        <taxon>Fungi</taxon>
        <taxon>Dikarya</taxon>
        <taxon>Ascomycota</taxon>
        <taxon>Saccharomycotina</taxon>
        <taxon>Pichiomycetes</taxon>
        <taxon>Pichiales</taxon>
        <taxon>Pichiaceae</taxon>
        <taxon>Komagataella</taxon>
    </lineage>
</organism>